<accession>P69427</accession>
<accession>O69415</accession>
<accession>O87926</accession>
<accession>P27856</accession>
<feature type="chain" id="PRO_0000192671" description="Sec-independent protein translocase protein TatB">
    <location>
        <begin position="1"/>
        <end position="171"/>
    </location>
</feature>
<feature type="transmembrane region" description="Helical" evidence="1">
    <location>
        <begin position="1"/>
        <end position="21"/>
    </location>
</feature>
<feature type="region of interest" description="Disordered" evidence="2">
    <location>
        <begin position="117"/>
        <end position="171"/>
    </location>
</feature>
<feature type="compositionally biased region" description="Polar residues" evidence="2">
    <location>
        <begin position="130"/>
        <end position="139"/>
    </location>
</feature>
<organism>
    <name type="scientific">Shigella flexneri</name>
    <dbReference type="NCBI Taxonomy" id="623"/>
    <lineage>
        <taxon>Bacteria</taxon>
        <taxon>Pseudomonadati</taxon>
        <taxon>Pseudomonadota</taxon>
        <taxon>Gammaproteobacteria</taxon>
        <taxon>Enterobacterales</taxon>
        <taxon>Enterobacteriaceae</taxon>
        <taxon>Shigella</taxon>
    </lineage>
</organism>
<reference key="1">
    <citation type="journal article" date="2002" name="Nucleic Acids Res.">
        <title>Genome sequence of Shigella flexneri 2a: insights into pathogenicity through comparison with genomes of Escherichia coli K12 and O157.</title>
        <authorList>
            <person name="Jin Q."/>
            <person name="Yuan Z."/>
            <person name="Xu J."/>
            <person name="Wang Y."/>
            <person name="Shen Y."/>
            <person name="Lu W."/>
            <person name="Wang J."/>
            <person name="Liu H."/>
            <person name="Yang J."/>
            <person name="Yang F."/>
            <person name="Zhang X."/>
            <person name="Zhang J."/>
            <person name="Yang G."/>
            <person name="Wu H."/>
            <person name="Qu D."/>
            <person name="Dong J."/>
            <person name="Sun L."/>
            <person name="Xue Y."/>
            <person name="Zhao A."/>
            <person name="Gao Y."/>
            <person name="Zhu J."/>
            <person name="Kan B."/>
            <person name="Ding K."/>
            <person name="Chen S."/>
            <person name="Cheng H."/>
            <person name="Yao Z."/>
            <person name="He B."/>
            <person name="Chen R."/>
            <person name="Ma D."/>
            <person name="Qiang B."/>
            <person name="Wen Y."/>
            <person name="Hou Y."/>
            <person name="Yu J."/>
        </authorList>
    </citation>
    <scope>NUCLEOTIDE SEQUENCE [LARGE SCALE GENOMIC DNA]</scope>
    <source>
        <strain>301 / Serotype 2a</strain>
    </source>
</reference>
<reference key="2">
    <citation type="journal article" date="2003" name="Infect. Immun.">
        <title>Complete genome sequence and comparative genomics of Shigella flexneri serotype 2a strain 2457T.</title>
        <authorList>
            <person name="Wei J."/>
            <person name="Goldberg M.B."/>
            <person name="Burland V."/>
            <person name="Venkatesan M.M."/>
            <person name="Deng W."/>
            <person name="Fournier G."/>
            <person name="Mayhew G.F."/>
            <person name="Plunkett G. III"/>
            <person name="Rose D.J."/>
            <person name="Darling A."/>
            <person name="Mau B."/>
            <person name="Perna N.T."/>
            <person name="Payne S.M."/>
            <person name="Runyen-Janecky L.J."/>
            <person name="Zhou S."/>
            <person name="Schwartz D.C."/>
            <person name="Blattner F.R."/>
        </authorList>
    </citation>
    <scope>NUCLEOTIDE SEQUENCE [LARGE SCALE GENOMIC DNA]</scope>
    <source>
        <strain>ATCC 700930 / 2457T / Serotype 2a</strain>
    </source>
</reference>
<name>TATB_SHIFL</name>
<gene>
    <name evidence="1" type="primary">tatB</name>
    <name type="synonym">mttA2</name>
    <name type="ordered locus">SF3915</name>
    <name type="ordered locus">S3838</name>
</gene>
<sequence>MFDIGFSELLLVFIIGLVVLGPQRLPVAVKTVAGWIRALRSLATTVQNELTQELKLQEFQDSLKKVEKASLTNLTPELKASMDELRQAAESMKRSYVANDPEKASDEAHTIHNPVVKDNEAAHEGVTPAAAQTQASSPEQKPETTPEPVVKPAADAEPKTAAPSPSSSDKP</sequence>
<evidence type="ECO:0000255" key="1">
    <source>
        <dbReference type="HAMAP-Rule" id="MF_00237"/>
    </source>
</evidence>
<evidence type="ECO:0000256" key="2">
    <source>
        <dbReference type="SAM" id="MobiDB-lite"/>
    </source>
</evidence>
<proteinExistence type="inferred from homology"/>
<protein>
    <recommendedName>
        <fullName evidence="1">Sec-independent protein translocase protein TatB</fullName>
    </recommendedName>
</protein>
<keyword id="KW-0997">Cell inner membrane</keyword>
<keyword id="KW-1003">Cell membrane</keyword>
<keyword id="KW-0472">Membrane</keyword>
<keyword id="KW-0653">Protein transport</keyword>
<keyword id="KW-1185">Reference proteome</keyword>
<keyword id="KW-0811">Translocation</keyword>
<keyword id="KW-0812">Transmembrane</keyword>
<keyword id="KW-1133">Transmembrane helix</keyword>
<keyword id="KW-0813">Transport</keyword>
<dbReference type="EMBL" id="AE005674">
    <property type="protein sequence ID" value="AAN45350.1"/>
    <property type="molecule type" value="Genomic_DNA"/>
</dbReference>
<dbReference type="EMBL" id="AE014073">
    <property type="protein sequence ID" value="AAP18848.1"/>
    <property type="molecule type" value="Genomic_DNA"/>
</dbReference>
<dbReference type="RefSeq" id="NP_709643.1">
    <property type="nucleotide sequence ID" value="NC_004337.2"/>
</dbReference>
<dbReference type="RefSeq" id="WP_000459594.1">
    <property type="nucleotide sequence ID" value="NZ_WPGW01000036.1"/>
</dbReference>
<dbReference type="SMR" id="P69427"/>
<dbReference type="STRING" id="198214.SF3915"/>
<dbReference type="PaxDb" id="198214-SF3915"/>
<dbReference type="GeneID" id="1027383"/>
<dbReference type="GeneID" id="93778098"/>
<dbReference type="KEGG" id="sfl:SF3915"/>
<dbReference type="KEGG" id="sfx:S3838"/>
<dbReference type="PATRIC" id="fig|198214.7.peg.4615"/>
<dbReference type="HOGENOM" id="CLU_086034_1_0_6"/>
<dbReference type="Proteomes" id="UP000001006">
    <property type="component" value="Chromosome"/>
</dbReference>
<dbReference type="Proteomes" id="UP000002673">
    <property type="component" value="Chromosome"/>
</dbReference>
<dbReference type="GO" id="GO:0033281">
    <property type="term" value="C:TAT protein transport complex"/>
    <property type="evidence" value="ECO:0007669"/>
    <property type="project" value="UniProtKB-UniRule"/>
</dbReference>
<dbReference type="GO" id="GO:0008320">
    <property type="term" value="F:protein transmembrane transporter activity"/>
    <property type="evidence" value="ECO:0007669"/>
    <property type="project" value="UniProtKB-UniRule"/>
</dbReference>
<dbReference type="GO" id="GO:0043953">
    <property type="term" value="P:protein transport by the Tat complex"/>
    <property type="evidence" value="ECO:0007669"/>
    <property type="project" value="UniProtKB-UniRule"/>
</dbReference>
<dbReference type="FunFam" id="1.20.5.3310:FF:000002">
    <property type="entry name" value="Sec-independent protein translocase protein TatB"/>
    <property type="match status" value="1"/>
</dbReference>
<dbReference type="Gene3D" id="1.20.5.3310">
    <property type="match status" value="1"/>
</dbReference>
<dbReference type="HAMAP" id="MF_00237">
    <property type="entry name" value="TatB"/>
    <property type="match status" value="1"/>
</dbReference>
<dbReference type="InterPro" id="IPR018448">
    <property type="entry name" value="TatB"/>
</dbReference>
<dbReference type="NCBIfam" id="TIGR01410">
    <property type="entry name" value="tatB"/>
    <property type="match status" value="1"/>
</dbReference>
<dbReference type="PANTHER" id="PTHR33162">
    <property type="entry name" value="SEC-INDEPENDENT PROTEIN TRANSLOCASE PROTEIN TATA, CHLOROPLASTIC"/>
    <property type="match status" value="1"/>
</dbReference>
<dbReference type="PANTHER" id="PTHR33162:SF1">
    <property type="entry name" value="SEC-INDEPENDENT PROTEIN TRANSLOCASE PROTEIN TATA, CHLOROPLASTIC"/>
    <property type="match status" value="1"/>
</dbReference>
<dbReference type="PRINTS" id="PR01506">
    <property type="entry name" value="TATBPROTEIN"/>
</dbReference>
<comment type="function">
    <text evidence="1">Part of the twin-arginine translocation (Tat) system that transports large folded proteins containing a characteristic twin-arginine motif in their signal peptide across membranes. Together with TatC, TatB is part of a receptor directly interacting with Tat signal peptides. TatB may form an oligomeric binding site that transiently accommodates folded Tat precursor proteins before their translocation.</text>
</comment>
<comment type="subunit">
    <text evidence="1">The Tat system comprises two distinct complexes: a TatABC complex, containing multiple copies of TatA, TatB and TatC subunits, and a separate TatA complex, containing only TatA subunits. Substrates initially bind to the TatABC complex, which probably triggers association of the separate TatA complex to form the active translocon.</text>
</comment>
<comment type="subcellular location">
    <subcellularLocation>
        <location evidence="1">Cell inner membrane</location>
        <topology evidence="1">Single-pass membrane protein</topology>
    </subcellularLocation>
</comment>
<comment type="similarity">
    <text evidence="1">Belongs to the TatB family.</text>
</comment>